<dbReference type="EC" id="1.8.1.2" evidence="1"/>
<dbReference type="EMBL" id="AP006627">
    <property type="protein sequence ID" value="BAD63158.1"/>
    <property type="molecule type" value="Genomic_DNA"/>
</dbReference>
<dbReference type="RefSeq" id="WP_011245474.1">
    <property type="nucleotide sequence ID" value="NC_006582.1"/>
</dbReference>
<dbReference type="SMR" id="Q5WKE7"/>
<dbReference type="STRING" id="66692.ABC0619"/>
<dbReference type="KEGG" id="bcl:ABC0619"/>
<dbReference type="eggNOG" id="COG0155">
    <property type="taxonomic scope" value="Bacteria"/>
</dbReference>
<dbReference type="HOGENOM" id="CLU_001975_3_2_9"/>
<dbReference type="OrthoDB" id="9803707at2"/>
<dbReference type="UniPathway" id="UPA00140">
    <property type="reaction ID" value="UER00207"/>
</dbReference>
<dbReference type="Proteomes" id="UP000001168">
    <property type="component" value="Chromosome"/>
</dbReference>
<dbReference type="GO" id="GO:0009337">
    <property type="term" value="C:sulfite reductase complex (NADPH)"/>
    <property type="evidence" value="ECO:0007669"/>
    <property type="project" value="InterPro"/>
</dbReference>
<dbReference type="GO" id="GO:0051539">
    <property type="term" value="F:4 iron, 4 sulfur cluster binding"/>
    <property type="evidence" value="ECO:0007669"/>
    <property type="project" value="UniProtKB-KW"/>
</dbReference>
<dbReference type="GO" id="GO:0020037">
    <property type="term" value="F:heme binding"/>
    <property type="evidence" value="ECO:0007669"/>
    <property type="project" value="InterPro"/>
</dbReference>
<dbReference type="GO" id="GO:0046872">
    <property type="term" value="F:metal ion binding"/>
    <property type="evidence" value="ECO:0007669"/>
    <property type="project" value="UniProtKB-KW"/>
</dbReference>
<dbReference type="GO" id="GO:0050661">
    <property type="term" value="F:NADP binding"/>
    <property type="evidence" value="ECO:0007669"/>
    <property type="project" value="InterPro"/>
</dbReference>
<dbReference type="GO" id="GO:0050311">
    <property type="term" value="F:sulfite reductase (ferredoxin) activity"/>
    <property type="evidence" value="ECO:0007669"/>
    <property type="project" value="TreeGrafter"/>
</dbReference>
<dbReference type="GO" id="GO:0004783">
    <property type="term" value="F:sulfite reductase (NADPH) activity"/>
    <property type="evidence" value="ECO:0007669"/>
    <property type="project" value="UniProtKB-UniRule"/>
</dbReference>
<dbReference type="GO" id="GO:0019344">
    <property type="term" value="P:cysteine biosynthetic process"/>
    <property type="evidence" value="ECO:0007669"/>
    <property type="project" value="UniProtKB-KW"/>
</dbReference>
<dbReference type="GO" id="GO:0070814">
    <property type="term" value="P:hydrogen sulfide biosynthetic process"/>
    <property type="evidence" value="ECO:0007669"/>
    <property type="project" value="UniProtKB-UniRule"/>
</dbReference>
<dbReference type="GO" id="GO:0000103">
    <property type="term" value="P:sulfate assimilation"/>
    <property type="evidence" value="ECO:0007669"/>
    <property type="project" value="UniProtKB-UniRule"/>
</dbReference>
<dbReference type="FunFam" id="3.30.413.10:FF:000003">
    <property type="entry name" value="Sulfite reductase [NADPH] hemoprotein beta-component"/>
    <property type="match status" value="1"/>
</dbReference>
<dbReference type="FunFam" id="3.30.413.10:FF:000004">
    <property type="entry name" value="Sulfite reductase [NADPH] hemoprotein beta-component"/>
    <property type="match status" value="1"/>
</dbReference>
<dbReference type="Gene3D" id="3.30.413.10">
    <property type="entry name" value="Sulfite Reductase Hemoprotein, domain 1"/>
    <property type="match status" value="2"/>
</dbReference>
<dbReference type="HAMAP" id="MF_01540">
    <property type="entry name" value="CysI"/>
    <property type="match status" value="1"/>
</dbReference>
<dbReference type="InterPro" id="IPR011786">
    <property type="entry name" value="CysI"/>
</dbReference>
<dbReference type="InterPro" id="IPR005117">
    <property type="entry name" value="NiRdtase/SiRdtase_haem-b_fer"/>
</dbReference>
<dbReference type="InterPro" id="IPR036136">
    <property type="entry name" value="Nit/Sulf_reduc_fer-like_dom_sf"/>
</dbReference>
<dbReference type="InterPro" id="IPR006067">
    <property type="entry name" value="NO2/SO3_Rdtase_4Fe4S_dom"/>
</dbReference>
<dbReference type="InterPro" id="IPR045169">
    <property type="entry name" value="NO2/SO3_Rdtase_4Fe4S_prot"/>
</dbReference>
<dbReference type="InterPro" id="IPR045854">
    <property type="entry name" value="NO2/SO3_Rdtase_4Fe4S_sf"/>
</dbReference>
<dbReference type="InterPro" id="IPR006066">
    <property type="entry name" value="NO2/SO3_Rdtase_FeS/sirohaem_BS"/>
</dbReference>
<dbReference type="NCBIfam" id="TIGR02041">
    <property type="entry name" value="CysI"/>
    <property type="match status" value="1"/>
</dbReference>
<dbReference type="NCBIfam" id="NF010029">
    <property type="entry name" value="PRK13504.1"/>
    <property type="match status" value="1"/>
</dbReference>
<dbReference type="PANTHER" id="PTHR11493:SF47">
    <property type="entry name" value="SULFITE REDUCTASE [NADPH] SUBUNIT BETA"/>
    <property type="match status" value="1"/>
</dbReference>
<dbReference type="PANTHER" id="PTHR11493">
    <property type="entry name" value="SULFITE REDUCTASE [NADPH] SUBUNIT BETA-RELATED"/>
    <property type="match status" value="1"/>
</dbReference>
<dbReference type="Pfam" id="PF01077">
    <property type="entry name" value="NIR_SIR"/>
    <property type="match status" value="1"/>
</dbReference>
<dbReference type="Pfam" id="PF03460">
    <property type="entry name" value="NIR_SIR_ferr"/>
    <property type="match status" value="2"/>
</dbReference>
<dbReference type="PRINTS" id="PR00397">
    <property type="entry name" value="SIROHAEM"/>
</dbReference>
<dbReference type="SUPFAM" id="SSF56014">
    <property type="entry name" value="Nitrite and sulphite reductase 4Fe-4S domain-like"/>
    <property type="match status" value="2"/>
</dbReference>
<dbReference type="SUPFAM" id="SSF55124">
    <property type="entry name" value="Nitrite/Sulfite reductase N-terminal domain-like"/>
    <property type="match status" value="2"/>
</dbReference>
<feature type="chain" id="PRO_0000388474" description="Sulfite reductase [NADPH] hemoprotein beta-component">
    <location>
        <begin position="1"/>
        <end position="573"/>
    </location>
</feature>
<feature type="binding site" evidence="1">
    <location>
        <position position="438"/>
    </location>
    <ligand>
        <name>[4Fe-4S] cluster</name>
        <dbReference type="ChEBI" id="CHEBI:49883"/>
    </ligand>
</feature>
<feature type="binding site" evidence="1">
    <location>
        <position position="444"/>
    </location>
    <ligand>
        <name>[4Fe-4S] cluster</name>
        <dbReference type="ChEBI" id="CHEBI:49883"/>
    </ligand>
</feature>
<feature type="binding site" evidence="1">
    <location>
        <position position="483"/>
    </location>
    <ligand>
        <name>[4Fe-4S] cluster</name>
        <dbReference type="ChEBI" id="CHEBI:49883"/>
    </ligand>
</feature>
<feature type="binding site" evidence="1">
    <location>
        <position position="487"/>
    </location>
    <ligand>
        <name>[4Fe-4S] cluster</name>
        <dbReference type="ChEBI" id="CHEBI:49883"/>
    </ligand>
</feature>
<feature type="binding site" description="axial binding residue" evidence="1">
    <location>
        <position position="487"/>
    </location>
    <ligand>
        <name>siroheme</name>
        <dbReference type="ChEBI" id="CHEBI:60052"/>
    </ligand>
    <ligandPart>
        <name>Fe</name>
        <dbReference type="ChEBI" id="CHEBI:18248"/>
    </ligandPart>
</feature>
<accession>Q5WKE7</accession>
<sequence length="573" mass="64743">MADQKFAPTQDGPPSDVERIKEESNYLRGTLAESLNEPLSAGIPDDDNRLMKFHGSYLQDDRDLREERRRQKLEPAYQFMVRVRLPGGVATPKQWLAMDDLAHRYGNGTLRLTTRQTFQMHGILKWNMKKNIQGINAALMDTIAACGDVNRNVMSTPNPYQSEVHGEVYDWAKKLSEALLPKTRAYHEIWLDEEKVAGTPQQDEVEPMYGPLYLPRKFKIGVAVPPANDVDIFSQDIGFIAILEEGKLTGFNVACGGGMGMTHGDTKTYPQLGRIIGFCEPQQIMDVAEKLITIQRDYGNRSVRKYARFKYTIDRRGLDWLKNELHARLGWELGEARPFQFDHNGDRYGWTKGVKGRWHLTLFIQNGRIQDTDDYQLMTGLREIAKIHTGEFRLTGNQNVIISNITAAKKKAIQAIVETYRLTDGQHVSALRRNSMACVAFPTCGLAMAESERYLPSLIDKLEFILDEAGIREEDIVIRMAGCPNGCSRAALAEIGFIGKAPGKYNLYLGGGFAGERLSKMYKENIGEAEILETLEPILFAYAKEREEGEHFGDFVIRKGYVKAVESGTDFHQ</sequence>
<proteinExistence type="inferred from homology"/>
<keyword id="KW-0004">4Fe-4S</keyword>
<keyword id="KW-0028">Amino-acid biosynthesis</keyword>
<keyword id="KW-0198">Cysteine biosynthesis</keyword>
<keyword id="KW-0349">Heme</keyword>
<keyword id="KW-0408">Iron</keyword>
<keyword id="KW-0411">Iron-sulfur</keyword>
<keyword id="KW-0479">Metal-binding</keyword>
<keyword id="KW-0521">NADP</keyword>
<keyword id="KW-0560">Oxidoreductase</keyword>
<keyword id="KW-1185">Reference proteome</keyword>
<protein>
    <recommendedName>
        <fullName evidence="1">Sulfite reductase [NADPH] hemoprotein beta-component</fullName>
        <shortName evidence="1">SiR-HP</shortName>
        <shortName evidence="1">SiRHP</shortName>
        <ecNumber evidence="1">1.8.1.2</ecNumber>
    </recommendedName>
</protein>
<reference key="1">
    <citation type="submission" date="2003-10" db="EMBL/GenBank/DDBJ databases">
        <title>The complete genome sequence of the alkaliphilic Bacillus clausii KSM-K16.</title>
        <authorList>
            <person name="Takaki Y."/>
            <person name="Kageyama Y."/>
            <person name="Shimamura S."/>
            <person name="Suzuki H."/>
            <person name="Nishi S."/>
            <person name="Hatada Y."/>
            <person name="Kawai S."/>
            <person name="Ito S."/>
            <person name="Horikoshi K."/>
        </authorList>
    </citation>
    <scope>NUCLEOTIDE SEQUENCE [LARGE SCALE GENOMIC DNA]</scope>
    <source>
        <strain>KSM-K16</strain>
    </source>
</reference>
<name>CYSI_SHOC1</name>
<gene>
    <name evidence="1" type="primary">cysI</name>
    <name type="ordered locus">ABC0619</name>
</gene>
<organism>
    <name type="scientific">Shouchella clausii (strain KSM-K16)</name>
    <name type="common">Alkalihalobacillus clausii</name>
    <dbReference type="NCBI Taxonomy" id="66692"/>
    <lineage>
        <taxon>Bacteria</taxon>
        <taxon>Bacillati</taxon>
        <taxon>Bacillota</taxon>
        <taxon>Bacilli</taxon>
        <taxon>Bacillales</taxon>
        <taxon>Bacillaceae</taxon>
        <taxon>Shouchella</taxon>
    </lineage>
</organism>
<comment type="function">
    <text evidence="1">Component of the sulfite reductase complex that catalyzes the 6-electron reduction of sulfite to sulfide. This is one of several activities required for the biosynthesis of L-cysteine from sulfate.</text>
</comment>
<comment type="catalytic activity">
    <reaction evidence="1">
        <text>hydrogen sulfide + 3 NADP(+) + 3 H2O = sulfite + 3 NADPH + 4 H(+)</text>
        <dbReference type="Rhea" id="RHEA:13801"/>
        <dbReference type="ChEBI" id="CHEBI:15377"/>
        <dbReference type="ChEBI" id="CHEBI:15378"/>
        <dbReference type="ChEBI" id="CHEBI:17359"/>
        <dbReference type="ChEBI" id="CHEBI:29919"/>
        <dbReference type="ChEBI" id="CHEBI:57783"/>
        <dbReference type="ChEBI" id="CHEBI:58349"/>
        <dbReference type="EC" id="1.8.1.2"/>
    </reaction>
</comment>
<comment type="cofactor">
    <cofactor evidence="1">
        <name>siroheme</name>
        <dbReference type="ChEBI" id="CHEBI:60052"/>
    </cofactor>
    <text evidence="1">Binds 1 siroheme per subunit.</text>
</comment>
<comment type="cofactor">
    <cofactor evidence="1">
        <name>[4Fe-4S] cluster</name>
        <dbReference type="ChEBI" id="CHEBI:49883"/>
    </cofactor>
    <text evidence="1">Binds 1 [4Fe-4S] cluster per subunit.</text>
</comment>
<comment type="pathway">
    <text evidence="1">Sulfur metabolism; hydrogen sulfide biosynthesis; hydrogen sulfide from sulfite (NADPH route): step 1/1.</text>
</comment>
<comment type="subunit">
    <text evidence="1">Alpha(8)-beta(8). The alpha component is a flavoprotein, the beta component is a hemoprotein.</text>
</comment>
<comment type="similarity">
    <text evidence="1">Belongs to the nitrite and sulfite reductase 4Fe-4S domain family.</text>
</comment>
<evidence type="ECO:0000255" key="1">
    <source>
        <dbReference type="HAMAP-Rule" id="MF_01540"/>
    </source>
</evidence>